<comment type="function">
    <text evidence="1">An aminoacyl-tRNA editing enzyme that deacylates mischarged D-aminoacyl-tRNAs. Also deacylates mischarged glycyl-tRNA(Ala), protecting cells against glycine mischarging by AlaRS. Acts via tRNA-based rather than protein-based catalysis; rejects L-amino acids rather than detecting D-amino acids in the active site. By recycling D-aminoacyl-tRNA to D-amino acids and free tRNA molecules, this enzyme counteracts the toxicity associated with the formation of D-aminoacyl-tRNA entities in vivo and helps enforce protein L-homochirality.</text>
</comment>
<comment type="catalytic activity">
    <reaction evidence="1">
        <text>glycyl-tRNA(Ala) + H2O = tRNA(Ala) + glycine + H(+)</text>
        <dbReference type="Rhea" id="RHEA:53744"/>
        <dbReference type="Rhea" id="RHEA-COMP:9657"/>
        <dbReference type="Rhea" id="RHEA-COMP:13640"/>
        <dbReference type="ChEBI" id="CHEBI:15377"/>
        <dbReference type="ChEBI" id="CHEBI:15378"/>
        <dbReference type="ChEBI" id="CHEBI:57305"/>
        <dbReference type="ChEBI" id="CHEBI:78442"/>
        <dbReference type="ChEBI" id="CHEBI:78522"/>
        <dbReference type="EC" id="3.1.1.96"/>
    </reaction>
</comment>
<comment type="catalytic activity">
    <reaction evidence="1">
        <text>a D-aminoacyl-tRNA + H2O = a tRNA + a D-alpha-amino acid + H(+)</text>
        <dbReference type="Rhea" id="RHEA:13953"/>
        <dbReference type="Rhea" id="RHEA-COMP:10123"/>
        <dbReference type="Rhea" id="RHEA-COMP:10124"/>
        <dbReference type="ChEBI" id="CHEBI:15377"/>
        <dbReference type="ChEBI" id="CHEBI:15378"/>
        <dbReference type="ChEBI" id="CHEBI:59871"/>
        <dbReference type="ChEBI" id="CHEBI:78442"/>
        <dbReference type="ChEBI" id="CHEBI:79333"/>
        <dbReference type="EC" id="3.1.1.96"/>
    </reaction>
</comment>
<comment type="subunit">
    <text evidence="1">Homodimer.</text>
</comment>
<comment type="subcellular location">
    <subcellularLocation>
        <location evidence="1">Cytoplasm</location>
    </subcellularLocation>
</comment>
<comment type="domain">
    <text evidence="1">A Gly-cisPro motif from one monomer fits into the active site of the other monomer to allow specific chiral rejection of L-amino acids.</text>
</comment>
<comment type="similarity">
    <text evidence="1">Belongs to the DTD family.</text>
</comment>
<comment type="sequence caution" evidence="2">
    <conflict type="erroneous initiation">
        <sequence resource="EMBL-CDS" id="AAW73851"/>
    </conflict>
    <text>Extended N-terminus.</text>
</comment>
<sequence length="146" mass="15761">MLALIQRVTRASVTVDDRIVGQIGPGLLALIGVEPGDRDAQTRRLAERLLSYRVFSDDAGKMNRSLTDTNGGLLLVSQFTLAADTSSGNRPGFSTAAPPEEAERAFNQLVDICREKHRGGVETGRFGAHMVVDLVNDGPVTFLLRP</sequence>
<name>DTD_XANOR</name>
<evidence type="ECO:0000255" key="1">
    <source>
        <dbReference type="HAMAP-Rule" id="MF_00518"/>
    </source>
</evidence>
<evidence type="ECO:0000305" key="2"/>
<feature type="chain" id="PRO_0000164622" description="D-aminoacyl-tRNA deacylase">
    <location>
        <begin position="1"/>
        <end position="146"/>
    </location>
</feature>
<feature type="short sequence motif" description="Gly-cisPro motif, important for rejection of L-amino acids" evidence="1">
    <location>
        <begin position="138"/>
        <end position="139"/>
    </location>
</feature>
<organism>
    <name type="scientific">Xanthomonas oryzae pv. oryzae (strain KACC10331 / KXO85)</name>
    <dbReference type="NCBI Taxonomy" id="291331"/>
    <lineage>
        <taxon>Bacteria</taxon>
        <taxon>Pseudomonadati</taxon>
        <taxon>Pseudomonadota</taxon>
        <taxon>Gammaproteobacteria</taxon>
        <taxon>Lysobacterales</taxon>
        <taxon>Lysobacteraceae</taxon>
        <taxon>Xanthomonas</taxon>
    </lineage>
</organism>
<gene>
    <name evidence="1" type="primary">dtd</name>
    <name type="ordered locus">XOO0597</name>
</gene>
<dbReference type="EC" id="3.1.1.96" evidence="1"/>
<dbReference type="EMBL" id="AE013598">
    <property type="protein sequence ID" value="AAW73851.1"/>
    <property type="status" value="ALT_INIT"/>
    <property type="molecule type" value="Genomic_DNA"/>
</dbReference>
<dbReference type="SMR" id="Q5H5B9"/>
<dbReference type="STRING" id="291331.XOO0597"/>
<dbReference type="KEGG" id="xoo:XOO0597"/>
<dbReference type="HOGENOM" id="CLU_076901_1_1_6"/>
<dbReference type="Proteomes" id="UP000006735">
    <property type="component" value="Chromosome"/>
</dbReference>
<dbReference type="GO" id="GO:0005737">
    <property type="term" value="C:cytoplasm"/>
    <property type="evidence" value="ECO:0007669"/>
    <property type="project" value="UniProtKB-SubCell"/>
</dbReference>
<dbReference type="GO" id="GO:0051500">
    <property type="term" value="F:D-tyrosyl-tRNA(Tyr) deacylase activity"/>
    <property type="evidence" value="ECO:0007669"/>
    <property type="project" value="TreeGrafter"/>
</dbReference>
<dbReference type="GO" id="GO:0106026">
    <property type="term" value="F:Gly-tRNA(Ala) deacylase activity"/>
    <property type="evidence" value="ECO:0007669"/>
    <property type="project" value="UniProtKB-UniRule"/>
</dbReference>
<dbReference type="GO" id="GO:0043908">
    <property type="term" value="F:Ser(Gly)-tRNA(Ala) hydrolase activity"/>
    <property type="evidence" value="ECO:0007669"/>
    <property type="project" value="UniProtKB-UniRule"/>
</dbReference>
<dbReference type="GO" id="GO:0000049">
    <property type="term" value="F:tRNA binding"/>
    <property type="evidence" value="ECO:0007669"/>
    <property type="project" value="UniProtKB-UniRule"/>
</dbReference>
<dbReference type="GO" id="GO:0019478">
    <property type="term" value="P:D-amino acid catabolic process"/>
    <property type="evidence" value="ECO:0007669"/>
    <property type="project" value="UniProtKB-UniRule"/>
</dbReference>
<dbReference type="CDD" id="cd00563">
    <property type="entry name" value="Dtyr_deacylase"/>
    <property type="match status" value="1"/>
</dbReference>
<dbReference type="FunFam" id="3.50.80.10:FF:000001">
    <property type="entry name" value="D-aminoacyl-tRNA deacylase"/>
    <property type="match status" value="1"/>
</dbReference>
<dbReference type="Gene3D" id="3.50.80.10">
    <property type="entry name" value="D-tyrosyl-tRNA(Tyr) deacylase"/>
    <property type="match status" value="1"/>
</dbReference>
<dbReference type="HAMAP" id="MF_00518">
    <property type="entry name" value="Deacylase_Dtd"/>
    <property type="match status" value="1"/>
</dbReference>
<dbReference type="InterPro" id="IPR003732">
    <property type="entry name" value="Daa-tRNA_deacyls_DTD"/>
</dbReference>
<dbReference type="InterPro" id="IPR023509">
    <property type="entry name" value="DTD-like_sf"/>
</dbReference>
<dbReference type="NCBIfam" id="TIGR00256">
    <property type="entry name" value="D-aminoacyl-tRNA deacylase"/>
    <property type="match status" value="1"/>
</dbReference>
<dbReference type="PANTHER" id="PTHR10472:SF5">
    <property type="entry name" value="D-AMINOACYL-TRNA DEACYLASE 1"/>
    <property type="match status" value="1"/>
</dbReference>
<dbReference type="PANTHER" id="PTHR10472">
    <property type="entry name" value="D-TYROSYL-TRNA TYR DEACYLASE"/>
    <property type="match status" value="1"/>
</dbReference>
<dbReference type="Pfam" id="PF02580">
    <property type="entry name" value="Tyr_Deacylase"/>
    <property type="match status" value="1"/>
</dbReference>
<dbReference type="SUPFAM" id="SSF69500">
    <property type="entry name" value="DTD-like"/>
    <property type="match status" value="1"/>
</dbReference>
<keyword id="KW-0963">Cytoplasm</keyword>
<keyword id="KW-0378">Hydrolase</keyword>
<keyword id="KW-1185">Reference proteome</keyword>
<keyword id="KW-0694">RNA-binding</keyword>
<keyword id="KW-0820">tRNA-binding</keyword>
<accession>Q5H5B9</accession>
<protein>
    <recommendedName>
        <fullName evidence="1">D-aminoacyl-tRNA deacylase</fullName>
        <shortName evidence="1">DTD</shortName>
        <ecNumber evidence="1">3.1.1.96</ecNumber>
    </recommendedName>
    <alternativeName>
        <fullName evidence="1">Gly-tRNA(Ala) deacylase</fullName>
    </alternativeName>
</protein>
<reference key="1">
    <citation type="journal article" date="2005" name="Nucleic Acids Res.">
        <title>The genome sequence of Xanthomonas oryzae pathovar oryzae KACC10331, the bacterial blight pathogen of rice.</title>
        <authorList>
            <person name="Lee B.-M."/>
            <person name="Park Y.-J."/>
            <person name="Park D.-S."/>
            <person name="Kang H.-W."/>
            <person name="Kim J.-G."/>
            <person name="Song E.-S."/>
            <person name="Park I.-C."/>
            <person name="Yoon U.-H."/>
            <person name="Hahn J.-H."/>
            <person name="Koo B.-S."/>
            <person name="Lee G.-B."/>
            <person name="Kim H."/>
            <person name="Park H.-S."/>
            <person name="Yoon K.-O."/>
            <person name="Kim J.-H."/>
            <person name="Jung C.-H."/>
            <person name="Koh N.-H."/>
            <person name="Seo J.-S."/>
            <person name="Go S.-J."/>
        </authorList>
    </citation>
    <scope>NUCLEOTIDE SEQUENCE [LARGE SCALE GENOMIC DNA]</scope>
    <source>
        <strain>KACC10331 / KXO85</strain>
    </source>
</reference>
<proteinExistence type="inferred from homology"/>